<dbReference type="EMBL" id="KF130762">
    <property type="protein sequence ID" value="AHY22613.1"/>
    <property type="molecule type" value="mRNA"/>
</dbReference>
<dbReference type="SMR" id="A0A023VZR2"/>
<dbReference type="GO" id="GO:0005576">
    <property type="term" value="C:extracellular region"/>
    <property type="evidence" value="ECO:0007669"/>
    <property type="project" value="UniProtKB-SubCell"/>
</dbReference>
<dbReference type="GO" id="GO:0090729">
    <property type="term" value="F:toxin activity"/>
    <property type="evidence" value="ECO:0007669"/>
    <property type="project" value="UniProtKB-KW"/>
</dbReference>
<evidence type="ECO:0000255" key="1"/>
<evidence type="ECO:0000269" key="2">
    <source>
    </source>
</evidence>
<evidence type="ECO:0000303" key="3">
    <source>
    </source>
</evidence>
<evidence type="ECO:0000303" key="4">
    <source>
    </source>
</evidence>
<evidence type="ECO:0000305" key="5"/>
<evidence type="ECO:0000305" key="6">
    <source>
    </source>
</evidence>
<accession>A0A023VZR2</accession>
<feature type="signal peptide" evidence="1">
    <location>
        <begin position="1"/>
        <end position="24"/>
    </location>
</feature>
<feature type="propeptide" id="PRO_0000446727" evidence="6">
    <location>
        <begin position="25"/>
        <end position="164"/>
    </location>
</feature>
<feature type="chain" id="PRO_5001524781" description="U-scoloptoxin(08)-Cw1a" evidence="2">
    <location>
        <begin position="165"/>
        <end position="206"/>
    </location>
</feature>
<feature type="repeat" description="RLWRNWE 1; approximate" evidence="6">
    <location>
        <begin position="37"/>
        <end position="43"/>
    </location>
</feature>
<feature type="repeat" description="RLWRNWE 2; approximate" evidence="6">
    <location>
        <begin position="71"/>
        <end position="77"/>
    </location>
</feature>
<feature type="repeat" description="RLWRNWE 3; approximate" evidence="6">
    <location>
        <begin position="104"/>
        <end position="110"/>
    </location>
</feature>
<feature type="repeat" description="RLWRNWE 4" evidence="6">
    <location>
        <begin position="137"/>
        <end position="143"/>
    </location>
</feature>
<feature type="repeat" description="RLWRNWE 5; approximate" evidence="6">
    <location>
        <begin position="164"/>
        <end position="170"/>
    </location>
</feature>
<organism>
    <name type="scientific">Cormocephalus westwoodi</name>
    <name type="common">Westwood's green centipede</name>
    <dbReference type="NCBI Taxonomy" id="1096223"/>
    <lineage>
        <taxon>Eukaryota</taxon>
        <taxon>Metazoa</taxon>
        <taxon>Ecdysozoa</taxon>
        <taxon>Arthropoda</taxon>
        <taxon>Myriapoda</taxon>
        <taxon>Chilopoda</taxon>
        <taxon>Pleurostigmophora</taxon>
        <taxon>Scolopendromorpha</taxon>
        <taxon>Scolopendridae</taxon>
        <taxon>Cormocephalus</taxon>
    </lineage>
</organism>
<protein>
    <recommendedName>
        <fullName evidence="4">U-scoloptoxin(08)-Cw1a</fullName>
        <shortName evidence="4">U-SLPTX(08)-Cw1a</shortName>
    </recommendedName>
    <alternativeName>
        <fullName evidence="3">U-SLPTX-Cw1a</fullName>
    </alternativeName>
</protein>
<keyword id="KW-0903">Direct protein sequencing</keyword>
<keyword id="KW-1015">Disulfide bond</keyword>
<keyword id="KW-0677">Repeat</keyword>
<keyword id="KW-0964">Secreted</keyword>
<keyword id="KW-0732">Signal</keyword>
<keyword id="KW-0800">Toxin</keyword>
<proteinExistence type="evidence at protein level"/>
<comment type="subcellular location">
    <subcellularLocation>
        <location evidence="6">Secreted</location>
    </subcellularLocation>
</comment>
<comment type="tissue specificity">
    <text evidence="6">Expressed by the venom gland.</text>
</comment>
<comment type="PTM">
    <text evidence="5">Contains 3 disulfide bonds.</text>
</comment>
<comment type="similarity">
    <text evidence="5">Belongs to the scoloptoxin-08 family.</text>
</comment>
<reference key="1">
    <citation type="journal article" date="2014" name="J. Proteomics">
        <title>Multifunctional warheads: diversification of the toxin arsenal of centipedes via novel multidomain transcripts.</title>
        <authorList>
            <person name="Undheim E.A."/>
            <person name="Sunagar K."/>
            <person name="Hamilton B.R."/>
            <person name="Jones A."/>
            <person name="Venter D.J."/>
            <person name="Fry B.G."/>
            <person name="King G.F."/>
        </authorList>
    </citation>
    <scope>NUCLEOTIDE SEQUENCE [MRNA]</scope>
    <scope>PROTEIN SEQUENCE OF 165-200</scope>
    <scope>IDENTIFICATION BY MASS SPECTROMETRY</scope>
    <source>
        <tissue>Venom</tissue>
        <tissue>Venom gland</tissue>
    </source>
</reference>
<reference key="2">
    <citation type="journal article" date="2014" name="Mol. Biol. Evol.">
        <title>Clawing through evolution: toxin diversification and convergence in the ancient lineage Chilopoda (centipedes).</title>
        <authorList>
            <person name="Undheim E.A."/>
            <person name="Jones A."/>
            <person name="Clauser K.R."/>
            <person name="Holland J.W."/>
            <person name="Pineda S.S."/>
            <person name="King G.F."/>
            <person name="Fry B.G."/>
        </authorList>
    </citation>
    <scope>NOMENCLATURE</scope>
</reference>
<name>TX81A_CORWE</name>
<sequence>MIFRVNLLFSCFCFVLFVFDFSNASKYDQGSLNIAKRLWRDWEREANAKDMERKEVKADAEGNAQMERERRLWRDWEASQAKPLERRAWVEAVEASDQNEREKRLWRDWEGNQANDLERRAMEGLMEANEENQRAKRLWRNWEANHEYEIERKRDLPELKRRKRLWRNEDQEVACTTKCSCSDNEIFSKVDHELTTSETKRVPCCC</sequence>